<evidence type="ECO:0000255" key="1"/>
<evidence type="ECO:0000269" key="2">
    <source>
    </source>
</evidence>
<evidence type="ECO:0000269" key="3">
    <source>
    </source>
</evidence>
<evidence type="ECO:0000269" key="4">
    <source>
    </source>
</evidence>
<evidence type="ECO:0000269" key="5">
    <source>
    </source>
</evidence>
<evidence type="ECO:0000269" key="6">
    <source>
    </source>
</evidence>
<evidence type="ECO:0000269" key="7">
    <source>
    </source>
</evidence>
<evidence type="ECO:0000269" key="8">
    <source>
    </source>
</evidence>
<evidence type="ECO:0000269" key="9">
    <source>
    </source>
</evidence>
<evidence type="ECO:0000269" key="10">
    <source>
    </source>
</evidence>
<evidence type="ECO:0000269" key="11">
    <source>
    </source>
</evidence>
<evidence type="ECO:0000269" key="12">
    <source>
    </source>
</evidence>
<evidence type="ECO:0000269" key="13">
    <source>
    </source>
</evidence>
<evidence type="ECO:0000269" key="14">
    <source>
    </source>
</evidence>
<evidence type="ECO:0000269" key="15">
    <source>
    </source>
</evidence>
<evidence type="ECO:0000269" key="16">
    <source>
    </source>
</evidence>
<evidence type="ECO:0000269" key="17">
    <source>
    </source>
</evidence>
<evidence type="ECO:0000269" key="18">
    <source>
    </source>
</evidence>
<evidence type="ECO:0000269" key="19">
    <source>
    </source>
</evidence>
<evidence type="ECO:0000269" key="20">
    <source>
    </source>
</evidence>
<evidence type="ECO:0000269" key="21">
    <source>
    </source>
</evidence>
<evidence type="ECO:0000269" key="22">
    <source>
    </source>
</evidence>
<evidence type="ECO:0000269" key="23">
    <source>
    </source>
</evidence>
<evidence type="ECO:0000269" key="24">
    <source>
    </source>
</evidence>
<evidence type="ECO:0000303" key="25">
    <source>
    </source>
</evidence>
<evidence type="ECO:0000305" key="26"/>
<evidence type="ECO:0000312" key="27">
    <source>
        <dbReference type="Araport" id="AT2G42540"/>
    </source>
</evidence>
<evidence type="ECO:0000312" key="28">
    <source>
        <dbReference type="EMBL" id="AAB87705.1"/>
    </source>
</evidence>
<evidence type="ECO:0000312" key="29">
    <source>
        <dbReference type="EMBL" id="AAD22999.1"/>
    </source>
</evidence>
<feature type="transit peptide" description="Chloroplast" evidence="11 22">
    <location>
        <begin position="1"/>
        <end position="40"/>
    </location>
</feature>
<feature type="chain" id="PRO_5001126580" description="Protein COLD-REGULATED 15A, chloroplastic" evidence="1">
    <location>
        <begin position="41"/>
        <end position="139"/>
    </location>
</feature>
<feature type="splice variant" id="VSP_057558" description="In isoform 2.">
    <location>
        <begin position="1"/>
        <end position="12"/>
    </location>
</feature>
<reference key="1">
    <citation type="journal article" date="1992" name="Plant Physiol.">
        <title>DNA sequence analysis of a complementary DNA for cold-regulated Arabidopsis gene cor15 and characterization of the COR 15 polypeptide.</title>
        <authorList>
            <person name="Lin C."/>
            <person name="Thomashow M.F."/>
        </authorList>
    </citation>
    <scope>NUCLEOTIDE SEQUENCE [MRNA] (ISOFORM 1)</scope>
    <scope>MISCELLANEOUS</scope>
    <scope>SUBCELLULAR LOCATION</scope>
    <scope>TRANSIT PEPTIDE</scope>
    <scope>INDUCTION BY COLD</scope>
    <source>
        <strain>cv. Columbia</strain>
        <strain>cv. Landsberg erecta</strain>
        <tissue>Rosette leaf</tissue>
    </source>
</reference>
<reference key="2">
    <citation type="journal article" date="1994" name="Plant Mol. Biol.">
        <title>The 5'-region of Arabidopsis thaliana cor15a has cis-acting elements that confer cold-, drought- and ABA-regulated gene expression.</title>
        <authorList>
            <person name="Baker S.S."/>
            <person name="Wilhelm K.S."/>
            <person name="Thomashow M.F."/>
        </authorList>
    </citation>
    <scope>NUCLEOTIDE SEQUENCE [MRNA] (ISOFORM 1)</scope>
    <scope>INDUCTION BY COLD; DROUGHT AND ABA</scope>
</reference>
<reference key="3">
    <citation type="journal article" date="1999" name="Nature">
        <title>Sequence and analysis of chromosome 2 of the plant Arabidopsis thaliana.</title>
        <authorList>
            <person name="Lin X."/>
            <person name="Kaul S."/>
            <person name="Rounsley S.D."/>
            <person name="Shea T.P."/>
            <person name="Benito M.-I."/>
            <person name="Town C.D."/>
            <person name="Fujii C.Y."/>
            <person name="Mason T.M."/>
            <person name="Bowman C.L."/>
            <person name="Barnstead M.E."/>
            <person name="Feldblyum T.V."/>
            <person name="Buell C.R."/>
            <person name="Ketchum K.A."/>
            <person name="Lee J.J."/>
            <person name="Ronning C.M."/>
            <person name="Koo H.L."/>
            <person name="Moffat K.S."/>
            <person name="Cronin L.A."/>
            <person name="Shen M."/>
            <person name="Pai G."/>
            <person name="Van Aken S."/>
            <person name="Umayam L."/>
            <person name="Tallon L.J."/>
            <person name="Gill J.E."/>
            <person name="Adams M.D."/>
            <person name="Carrera A.J."/>
            <person name="Creasy T.H."/>
            <person name="Goodman H.M."/>
            <person name="Somerville C.R."/>
            <person name="Copenhaver G.P."/>
            <person name="Preuss D."/>
            <person name="Nierman W.C."/>
            <person name="White O."/>
            <person name="Eisen J.A."/>
            <person name="Salzberg S.L."/>
            <person name="Fraser C.M."/>
            <person name="Venter J.C."/>
        </authorList>
    </citation>
    <scope>NUCLEOTIDE SEQUENCE [LARGE SCALE GENOMIC DNA]</scope>
    <source>
        <strain>cv. Columbia</strain>
    </source>
</reference>
<reference key="4">
    <citation type="journal article" date="2017" name="Plant J.">
        <title>Araport11: a complete reannotation of the Arabidopsis thaliana reference genome.</title>
        <authorList>
            <person name="Cheng C.Y."/>
            <person name="Krishnakumar V."/>
            <person name="Chan A.P."/>
            <person name="Thibaud-Nissen F."/>
            <person name="Schobel S."/>
            <person name="Town C.D."/>
        </authorList>
    </citation>
    <scope>GENOME REANNOTATION</scope>
    <source>
        <strain>cv. Columbia</strain>
    </source>
</reference>
<reference key="5">
    <citation type="journal article" date="2003" name="Science">
        <title>Empirical analysis of transcriptional activity in the Arabidopsis genome.</title>
        <authorList>
            <person name="Yamada K."/>
            <person name="Lim J."/>
            <person name="Dale J.M."/>
            <person name="Chen H."/>
            <person name="Shinn P."/>
            <person name="Palm C.J."/>
            <person name="Southwick A.M."/>
            <person name="Wu H.C."/>
            <person name="Kim C.J."/>
            <person name="Nguyen M."/>
            <person name="Pham P.K."/>
            <person name="Cheuk R.F."/>
            <person name="Karlin-Newmann G."/>
            <person name="Liu S.X."/>
            <person name="Lam B."/>
            <person name="Sakano H."/>
            <person name="Wu T."/>
            <person name="Yu G."/>
            <person name="Miranda M."/>
            <person name="Quach H.L."/>
            <person name="Tripp M."/>
            <person name="Chang C.H."/>
            <person name="Lee J.M."/>
            <person name="Toriumi M.J."/>
            <person name="Chan M.M."/>
            <person name="Tang C.C."/>
            <person name="Onodera C.S."/>
            <person name="Deng J.M."/>
            <person name="Akiyama K."/>
            <person name="Ansari Y."/>
            <person name="Arakawa T."/>
            <person name="Banh J."/>
            <person name="Banno F."/>
            <person name="Bowser L."/>
            <person name="Brooks S.Y."/>
            <person name="Carninci P."/>
            <person name="Chao Q."/>
            <person name="Choy N."/>
            <person name="Enju A."/>
            <person name="Goldsmith A.D."/>
            <person name="Gurjal M."/>
            <person name="Hansen N.F."/>
            <person name="Hayashizaki Y."/>
            <person name="Johnson-Hopson C."/>
            <person name="Hsuan V.W."/>
            <person name="Iida K."/>
            <person name="Karnes M."/>
            <person name="Khan S."/>
            <person name="Koesema E."/>
            <person name="Ishida J."/>
            <person name="Jiang P.X."/>
            <person name="Jones T."/>
            <person name="Kawai J."/>
            <person name="Kamiya A."/>
            <person name="Meyers C."/>
            <person name="Nakajima M."/>
            <person name="Narusaka M."/>
            <person name="Seki M."/>
            <person name="Sakurai T."/>
            <person name="Satou M."/>
            <person name="Tamse R."/>
            <person name="Vaysberg M."/>
            <person name="Wallender E.K."/>
            <person name="Wong C."/>
            <person name="Yamamura Y."/>
            <person name="Yuan S."/>
            <person name="Shinozaki K."/>
            <person name="Davis R.W."/>
            <person name="Theologis A."/>
            <person name="Ecker J.R."/>
        </authorList>
    </citation>
    <scope>NUCLEOTIDE SEQUENCE [LARGE SCALE MRNA] (ISOFORM 1)</scope>
    <source>
        <strain>cv. Columbia</strain>
    </source>
</reference>
<reference key="6">
    <citation type="journal article" date="1992" name="Biochem. Biophys. Res. Commun.">
        <title>A cold-regulated Arabidopsis gene encodes a polypeptide having potent cryoprotective activity.</title>
        <authorList>
            <person name="Lin C."/>
            <person name="Thomashow M.F."/>
        </authorList>
    </citation>
    <scope>FUNCTION</scope>
    <source>
        <strain>cv. Columbia</strain>
    </source>
</reference>
<reference key="7">
    <citation type="journal article" date="1996" name="Plant Physiol.">
        <title>Purification and properties of Arabidopsis thaliana COR (cold-regulated) gene polypeptides COR15am and COR6.6 expressed in Escherichia coli.</title>
        <authorList>
            <person name="Gilmour S.J."/>
            <person name="Lin C."/>
            <person name="Thomashow M.F."/>
        </authorList>
    </citation>
    <scope>SUBCELLULAR LOCATION</scope>
    <scope>TRANSIT PEPTIDE</scope>
</reference>
<reference key="8">
    <citation type="journal article" date="1996" name="Proc. Natl. Acad. Sci. U.S.A.">
        <title>Constitutive expression of the cold-regulated Arabidopsis thaliana COR15a gene affects both chloroplast and protoplast freezing tolerance.</title>
        <authorList>
            <person name="Artus N.N."/>
            <person name="Uemura M."/>
            <person name="Steponkus P.L."/>
            <person name="Gilmour S.J."/>
            <person name="Lin C."/>
            <person name="Thomashow M.F."/>
        </authorList>
    </citation>
    <scope>FUNCTION</scope>
    <source>
        <strain>cv. RLD</strain>
    </source>
</reference>
<reference key="9">
    <citation type="journal article" date="1998" name="Plant Cell">
        <title>HOS1, a genetic locus involved in cold-responsive gene expression in arabidopsis.</title>
        <authorList>
            <person name="Ishitani M."/>
            <person name="Xiong L."/>
            <person name="Lee H."/>
            <person name="Stevenson B."/>
            <person name="Zhu J.K."/>
        </authorList>
    </citation>
    <scope>INDUCTION BY ABSCISIC ACID; HIGH SALT; POLYETHYLENE GLYCOL AND COLD</scope>
</reference>
<reference key="10">
    <citation type="journal article" date="1998" name="Proc. Natl. Acad. Sci. U.S.A.">
        <title>Mode of action of the COR15a gene on the freezing tolerance of Arabidopsis thaliana.</title>
        <authorList>
            <person name="Steponkus P.L."/>
            <person name="Uemura M."/>
            <person name="Joseph R.A."/>
            <person name="Gilmour S.J."/>
            <person name="Thomashow M.F."/>
        </authorList>
    </citation>
    <scope>FUNCTION</scope>
    <source>
        <strain>cv. RLD</strain>
    </source>
</reference>
<reference key="11">
    <citation type="journal article" date="2001" name="Plant Physiol.">
        <title>Components of the Arabidopsis C-repeat/dehydration-responsive element binding factor cold-response pathway are conserved in Brassica napus and other plant species.</title>
        <authorList>
            <person name="Jaglo K.R."/>
            <person name="Kleff S."/>
            <person name="Amundsen K.L."/>
            <person name="Zhang X."/>
            <person name="Haake V."/>
            <person name="Zhang J.Z."/>
            <person name="Deits T."/>
            <person name="Thomashow M.F."/>
        </authorList>
    </citation>
    <scope>INDUCTION BY COLD</scope>
</reference>
<reference key="12">
    <citation type="journal article" date="2002" name="J. Biol. Chem.">
        <title>Regulation of osmotic stress-responsive gene expression by the LOS6/ABA1 locus in Arabidopsis.</title>
        <authorList>
            <person name="Xiong L."/>
            <person name="Lee H."/>
            <person name="Ishitani M."/>
            <person name="Zhu J.-K."/>
        </authorList>
    </citation>
    <scope>INDUCTION BY SALT; COLD; ABSCISIC ACID AND POLYETHYLENE GLYCOL</scope>
</reference>
<reference key="13">
    <citation type="journal article" date="2002" name="Plant J.">
        <title>Light signalling mediated by phytochrome plays an important role in cold-induced gene expression through the C-repeat/dehydration responsive element (C/DRE) in Arabidopsis thaliana.</title>
        <authorList>
            <person name="Kim H.-J."/>
            <person name="Kim Y.-K."/>
            <person name="Park J.-Y."/>
            <person name="Kim J."/>
        </authorList>
    </citation>
    <scope>INDUCTION BY COLD; LIGHT AND DROUGHT</scope>
</reference>
<reference key="14">
    <citation type="journal article" date="2003" name="Photochem. Photobiol.">
        <title>Identification of Arabidopsis genes regulated by high light-stress using cDNA microarray.</title>
        <authorList>
            <person name="Kimura M."/>
            <person name="Yamamoto Y.Y."/>
            <person name="Seki M."/>
            <person name="Sakurai T."/>
            <person name="Sato M."/>
            <person name="Abe T."/>
            <person name="Yoshida S."/>
            <person name="Manabe K."/>
            <person name="Shinozaki K."/>
            <person name="Matsui M."/>
        </authorList>
    </citation>
    <scope>INDUCTION BY HIGH LIGHT AND DROUGHT</scope>
    <source>
        <strain>cv. Columbia</strain>
    </source>
</reference>
<reference key="15">
    <citation type="journal article" date="2004" name="Nat. Genet.">
        <title>A genetic link between cold responses and flowering time through FVE in Arabidopsis thaliana.</title>
        <authorList>
            <person name="Kim H.-J."/>
            <person name="Hyun Y."/>
            <person name="Park J.-Y."/>
            <person name="Park M.-J."/>
            <person name="Park M.-K."/>
            <person name="Kim M.D."/>
            <person name="Kim H.-J."/>
            <person name="Lee M.H."/>
            <person name="Moon J."/>
            <person name="Lee I."/>
            <person name="Kim J."/>
        </authorList>
    </citation>
    <scope>INDUCTION BY COLD</scope>
</reference>
<reference key="16">
    <citation type="journal article" date="2004" name="Plant J.">
        <title>Heterosis in the freezing tolerance of crosses between two Arabidopsis thaliana accessions (Columbia-0 and C24) that show differences in non-acclimated and acclimated freezing tolerance.</title>
        <authorList>
            <person name="Rohde P."/>
            <person name="Hincha D.K."/>
            <person name="Heyer A.G."/>
        </authorList>
    </citation>
    <scope>INDUCTION BY COLD ACCLIMATION</scope>
    <source>
        <strain>cv. C24</strain>
        <strain>cv. Columbia</strain>
    </source>
</reference>
<reference key="17">
    <citation type="journal article" date="2005" name="Plant Physiol.">
        <title>The cold-induced early activation of phospholipase C and D pathways determines the response of two distinct clusters of genes in Arabidopsis cell suspensions.</title>
        <authorList>
            <person name="Vergnolle C."/>
            <person name="Vaultier M.-N."/>
            <person name="Taconnat L."/>
            <person name="Renou J.-P."/>
            <person name="Kader J.-C."/>
            <person name="Zachowski A."/>
            <person name="Ruelland E."/>
        </authorList>
    </citation>
    <scope>INDUCTION BY COLD</scope>
</reference>
<reference key="18">
    <citation type="journal article" date="2007" name="Plant Physiol.">
        <title>Arabidopsis Cor15am is a chloroplast stromal protein that has cryoprotective activity and forms oligomers.</title>
        <authorList>
            <person name="Nakayama K."/>
            <person name="Okawa K."/>
            <person name="Kakizaki T."/>
            <person name="Honma T."/>
            <person name="Itoh H."/>
            <person name="Inaba T."/>
        </authorList>
    </citation>
    <scope>FUNCTION</scope>
    <scope>SUBUNIT</scope>
    <scope>SUBCELLULAR LOCATION</scope>
    <scope>INDUCTION BY COLD</scope>
    <scope>MISCELLANEOUS</scope>
    <source>
        <strain>cv. Columbia</strain>
    </source>
</reference>
<reference key="19">
    <citation type="journal article" date="2008" name="Biosci. Biotechnol. Biochem.">
        <title>Evaluation of the protective activities of a late embryogenesis abundant (LEA) related protein, Cor15am, during various stresses in vitro.</title>
        <authorList>
            <person name="Nakayama K."/>
            <person name="Okawa K."/>
            <person name="Kakizaki T."/>
            <person name="Inaba T."/>
        </authorList>
    </citation>
    <scope>FUNCTION</scope>
</reference>
<reference key="20">
    <citation type="journal article" date="2009" name="Plant Biol.">
        <title>Differential expression of the CBF pathway and cell cycle-related genes in Arabidopsis accessions in response to chronic low-temperature exposure.</title>
        <authorList>
            <person name="Lee Y.P."/>
            <person name="Fleming A.J."/>
            <person name="Koerner C."/>
            <person name="Meins F. Jr."/>
        </authorList>
    </citation>
    <scope>INDUCTION BY COLD</scope>
</reference>
<reference key="21">
    <citation type="journal article" date="2009" name="Plant J.">
        <title>Histone occupancy-dependent and -independent removal of H3K27 trimethylation at cold-responsive genes in Arabidopsis.</title>
        <authorList>
            <person name="Kwon C.S."/>
            <person name="Lee D."/>
            <person name="Choi G."/>
            <person name="Chung W.I."/>
        </authorList>
    </citation>
    <scope>INDUCTION BY COLD</scope>
</reference>
<reference key="22">
    <citation type="journal article" date="2009" name="Plant J.">
        <title>A moderate decrease in temperature induces COR15a expression through the CBF signaling cascade and enhances freezing tolerance.</title>
        <authorList>
            <person name="Wang Y."/>
            <person name="Hua J."/>
        </authorList>
    </citation>
    <scope>INDUCTION BY COOLING AND COLD</scope>
    <scope>FUNCTION</scope>
</reference>
<reference key="23">
    <citation type="journal article" date="2010" name="Biochim. Biophys. Acta">
        <title>Interaction of two intrinsically disordered plant stress proteins (COR15A and COR15B) with lipid membranes in the dry state.</title>
        <authorList>
            <person name="Thalhammer A."/>
            <person name="Hundertmark M."/>
            <person name="Popova A.V."/>
            <person name="Seckler R."/>
            <person name="Hincha D.K."/>
        </authorList>
    </citation>
    <scope>FUNCTION</scope>
    <scope>MISCELLANEOUS</scope>
    <scope>SUBUNIT</scope>
</reference>
<reference key="24">
    <citation type="journal article" date="2011" name="Plant Cell">
        <title>The Arabidopsis NAC transcription factor VNI2 integrates abscisic acid signals into leaf senescence via the COR/RD genes.</title>
        <authorList>
            <person name="Yang S.-D."/>
            <person name="Seo P.J."/>
            <person name="Yoon H.-K."/>
            <person name="Park C.-M."/>
        </authorList>
    </citation>
    <scope>INVOLVEMENT IN SENESCENCE</scope>
    <scope>INDUCTION BY ABSCISIC ACID</scope>
    <source>
        <strain>cv. Columbia</strain>
    </source>
</reference>
<reference key="25">
    <citation type="journal article" date="2011" name="Plant Physiol.">
        <title>An AP2 domain-containing gene, ESE1, targeted by the ethylene signaling component EIN3 is important for the salt response in Arabidopsis.</title>
        <authorList>
            <person name="Zhang L."/>
            <person name="Li Z."/>
            <person name="Quan R."/>
            <person name="Li G."/>
            <person name="Wang R."/>
            <person name="Huang R."/>
        </authorList>
    </citation>
    <scope>INDUCTION BY SALT</scope>
</reference>
<reference key="26">
    <citation type="journal article" date="2011" name="Proc. Natl. Acad. Sci. U.S.A.">
        <title>Circadian clock-associated 1 and late elongated hypocotyl regulate expression of the C-repeat binding factor (CBF) pathway in Arabidopsis.</title>
        <authorList>
            <person name="Dong M.A."/>
            <person name="Farre E.M."/>
            <person name="Thomashow M.F."/>
        </authorList>
    </citation>
    <scope>INDUCTION BY LIGHT AND COLD</scope>
    <source>
        <strain>cv. Wassilewskija-2</strain>
    </source>
</reference>
<organism evidence="28">
    <name type="scientific">Arabidopsis thaliana</name>
    <name type="common">Mouse-ear cress</name>
    <dbReference type="NCBI Taxonomy" id="3702"/>
    <lineage>
        <taxon>Eukaryota</taxon>
        <taxon>Viridiplantae</taxon>
        <taxon>Streptophyta</taxon>
        <taxon>Embryophyta</taxon>
        <taxon>Tracheophyta</taxon>
        <taxon>Spermatophyta</taxon>
        <taxon>Magnoliopsida</taxon>
        <taxon>eudicotyledons</taxon>
        <taxon>Gunneridae</taxon>
        <taxon>Pentapetalae</taxon>
        <taxon>rosids</taxon>
        <taxon>malvids</taxon>
        <taxon>Brassicales</taxon>
        <taxon>Brassicaceae</taxon>
        <taxon>Camelineae</taxon>
        <taxon>Arabidopsis</taxon>
    </lineage>
</organism>
<name>CR15A_ARATH</name>
<accession>Q42512</accession>
<accession>F4IP48</accession>
<proteinExistence type="evidence at protein level"/>
<dbReference type="EMBL" id="X64138">
    <property type="protein sequence ID" value="CAA45499.1"/>
    <property type="molecule type" value="mRNA"/>
</dbReference>
<dbReference type="EMBL" id="U01377">
    <property type="protein sequence ID" value="AAB87705.1"/>
    <property type="molecule type" value="Unassigned_DNA"/>
</dbReference>
<dbReference type="EMBL" id="AC007087">
    <property type="protein sequence ID" value="AAD22999.1"/>
    <property type="molecule type" value="Genomic_DNA"/>
</dbReference>
<dbReference type="EMBL" id="CP002685">
    <property type="protein sequence ID" value="AEC10135.1"/>
    <property type="molecule type" value="Genomic_DNA"/>
</dbReference>
<dbReference type="EMBL" id="CP002685">
    <property type="protein sequence ID" value="AEC10136.1"/>
    <property type="molecule type" value="Genomic_DNA"/>
</dbReference>
<dbReference type="EMBL" id="CP002685">
    <property type="protein sequence ID" value="ANM61537.1"/>
    <property type="molecule type" value="Genomic_DNA"/>
</dbReference>
<dbReference type="EMBL" id="AY039853">
    <property type="protein sequence ID" value="AAK63957.1"/>
    <property type="molecule type" value="mRNA"/>
</dbReference>
<dbReference type="EMBL" id="AY057640">
    <property type="protein sequence ID" value="AAL15271.1"/>
    <property type="molecule type" value="mRNA"/>
</dbReference>
<dbReference type="EMBL" id="AY113048">
    <property type="protein sequence ID" value="AAM47356.1"/>
    <property type="molecule type" value="mRNA"/>
</dbReference>
<dbReference type="PIR" id="S43769">
    <property type="entry name" value="S43769"/>
</dbReference>
<dbReference type="RefSeq" id="NP_001323750.1">
    <molecule id="Q42512-2"/>
    <property type="nucleotide sequence ID" value="NM_001336986.1"/>
</dbReference>
<dbReference type="RefSeq" id="NP_181782.1">
    <molecule id="Q42512-1"/>
    <property type="nucleotide sequence ID" value="NM_129815.5"/>
</dbReference>
<dbReference type="RefSeq" id="NP_850371.1">
    <molecule id="Q42512-2"/>
    <property type="nucleotide sequence ID" value="NM_180040.3"/>
</dbReference>
<dbReference type="SMR" id="Q42512"/>
<dbReference type="FunCoup" id="Q42512">
    <property type="interactions" value="25"/>
</dbReference>
<dbReference type="STRING" id="3702.Q42512"/>
<dbReference type="iPTMnet" id="Q42512"/>
<dbReference type="PaxDb" id="3702-AT2G42540.2"/>
<dbReference type="ProteomicsDB" id="220551">
    <molecule id="Q42512-1"/>
</dbReference>
<dbReference type="EnsemblPlants" id="AT2G42540.1">
    <molecule id="Q42512-2"/>
    <property type="protein sequence ID" value="AT2G42540.1"/>
    <property type="gene ID" value="AT2G42540"/>
</dbReference>
<dbReference type="EnsemblPlants" id="AT2G42540.2">
    <molecule id="Q42512-1"/>
    <property type="protein sequence ID" value="AT2G42540.2"/>
    <property type="gene ID" value="AT2G42540"/>
</dbReference>
<dbReference type="EnsemblPlants" id="AT2G42540.4">
    <molecule id="Q42512-2"/>
    <property type="protein sequence ID" value="AT2G42540.4"/>
    <property type="gene ID" value="AT2G42540"/>
</dbReference>
<dbReference type="GeneID" id="818854"/>
<dbReference type="Gramene" id="AT2G42540.1">
    <molecule id="Q42512-2"/>
    <property type="protein sequence ID" value="AT2G42540.1"/>
    <property type="gene ID" value="AT2G42540"/>
</dbReference>
<dbReference type="Gramene" id="AT2G42540.2">
    <molecule id="Q42512-1"/>
    <property type="protein sequence ID" value="AT2G42540.2"/>
    <property type="gene ID" value="AT2G42540"/>
</dbReference>
<dbReference type="Gramene" id="AT2G42540.4">
    <molecule id="Q42512-2"/>
    <property type="protein sequence ID" value="AT2G42540.4"/>
    <property type="gene ID" value="AT2G42540"/>
</dbReference>
<dbReference type="KEGG" id="ath:AT2G42540"/>
<dbReference type="Araport" id="AT2G42540"/>
<dbReference type="TAIR" id="AT2G42540">
    <property type="gene designation" value="COR15A"/>
</dbReference>
<dbReference type="InParanoid" id="Q42512"/>
<dbReference type="OrthoDB" id="1105342at2759"/>
<dbReference type="PhylomeDB" id="Q42512"/>
<dbReference type="PRO" id="PR:Q42512"/>
<dbReference type="Proteomes" id="UP000006548">
    <property type="component" value="Chromosome 2"/>
</dbReference>
<dbReference type="ExpressionAtlas" id="Q42512">
    <property type="expression patterns" value="baseline and differential"/>
</dbReference>
<dbReference type="GO" id="GO:0009507">
    <property type="term" value="C:chloroplast"/>
    <property type="evidence" value="ECO:0007005"/>
    <property type="project" value="TAIR"/>
</dbReference>
<dbReference type="GO" id="GO:0009941">
    <property type="term" value="C:chloroplast envelope"/>
    <property type="evidence" value="ECO:0007005"/>
    <property type="project" value="TAIR"/>
</dbReference>
<dbReference type="GO" id="GO:0009570">
    <property type="term" value="C:chloroplast stroma"/>
    <property type="evidence" value="ECO:0000314"/>
    <property type="project" value="UniProtKB"/>
</dbReference>
<dbReference type="GO" id="GO:0005829">
    <property type="term" value="C:cytosol"/>
    <property type="evidence" value="ECO:0007005"/>
    <property type="project" value="TAIR"/>
</dbReference>
<dbReference type="GO" id="GO:0005534">
    <property type="term" value="F:galactose binding"/>
    <property type="evidence" value="ECO:0000314"/>
    <property type="project" value="UniProtKB"/>
</dbReference>
<dbReference type="GO" id="GO:0008289">
    <property type="term" value="F:lipid binding"/>
    <property type="evidence" value="ECO:0000314"/>
    <property type="project" value="UniProtKB"/>
</dbReference>
<dbReference type="GO" id="GO:0007623">
    <property type="term" value="P:circadian rhythm"/>
    <property type="evidence" value="ECO:0000316"/>
    <property type="project" value="UniProtKB"/>
</dbReference>
<dbReference type="GO" id="GO:0009631">
    <property type="term" value="P:cold acclimation"/>
    <property type="evidence" value="ECO:0000314"/>
    <property type="project" value="UniProtKB"/>
</dbReference>
<dbReference type="GO" id="GO:0009819">
    <property type="term" value="P:drought recovery"/>
    <property type="evidence" value="ECO:0000314"/>
    <property type="project" value="UniProtKB"/>
</dbReference>
<dbReference type="GO" id="GO:0010286">
    <property type="term" value="P:heat acclimation"/>
    <property type="evidence" value="ECO:0000314"/>
    <property type="project" value="UniProtKB"/>
</dbReference>
<dbReference type="GO" id="GO:0010150">
    <property type="term" value="P:leaf senescence"/>
    <property type="evidence" value="ECO:0000315"/>
    <property type="project" value="TAIR"/>
</dbReference>
<dbReference type="GO" id="GO:0009667">
    <property type="term" value="P:plastid inner membrane organization"/>
    <property type="evidence" value="ECO:0000314"/>
    <property type="project" value="UniProtKB"/>
</dbReference>
<dbReference type="GO" id="GO:0051259">
    <property type="term" value="P:protein complex oligomerization"/>
    <property type="evidence" value="ECO:0000314"/>
    <property type="project" value="UniProtKB"/>
</dbReference>
<dbReference type="GO" id="GO:0051260">
    <property type="term" value="P:protein homooligomerization"/>
    <property type="evidence" value="ECO:0000314"/>
    <property type="project" value="UniProtKB"/>
</dbReference>
<dbReference type="GO" id="GO:0050821">
    <property type="term" value="P:protein stabilization"/>
    <property type="evidence" value="ECO:0000314"/>
    <property type="project" value="TAIR"/>
</dbReference>
<dbReference type="GO" id="GO:0010017">
    <property type="term" value="P:red or far-red light signaling pathway"/>
    <property type="evidence" value="ECO:0000270"/>
    <property type="project" value="TAIR"/>
</dbReference>
<dbReference type="GO" id="GO:0009737">
    <property type="term" value="P:response to abscisic acid"/>
    <property type="evidence" value="ECO:0000270"/>
    <property type="project" value="UniProtKB"/>
</dbReference>
<dbReference type="GO" id="GO:0009409">
    <property type="term" value="P:response to cold"/>
    <property type="evidence" value="ECO:0000314"/>
    <property type="project" value="DisProt"/>
</dbReference>
<dbReference type="GO" id="GO:0050826">
    <property type="term" value="P:response to freezing"/>
    <property type="evidence" value="ECO:0000314"/>
    <property type="project" value="TAIR"/>
</dbReference>
<dbReference type="GO" id="GO:0009644">
    <property type="term" value="P:response to high light intensity"/>
    <property type="evidence" value="ECO:0000270"/>
    <property type="project" value="UniProtKB"/>
</dbReference>
<dbReference type="GO" id="GO:0009416">
    <property type="term" value="P:response to light stimulus"/>
    <property type="evidence" value="ECO:0000270"/>
    <property type="project" value="UniProtKB"/>
</dbReference>
<dbReference type="GO" id="GO:0006970">
    <property type="term" value="P:response to osmotic stress"/>
    <property type="evidence" value="ECO:0000316"/>
    <property type="project" value="TAIR"/>
</dbReference>
<dbReference type="GO" id="GO:0009651">
    <property type="term" value="P:response to salt stress"/>
    <property type="evidence" value="ECO:0000270"/>
    <property type="project" value="UniProtKB"/>
</dbReference>
<dbReference type="GO" id="GO:0009414">
    <property type="term" value="P:response to water deprivation"/>
    <property type="evidence" value="ECO:0000270"/>
    <property type="project" value="UniProtKB"/>
</dbReference>
<dbReference type="DisProt" id="DP01057"/>
<keyword id="KW-0025">Alternative splicing</keyword>
<keyword id="KW-0150">Chloroplast</keyword>
<keyword id="KW-0446">Lipid-binding</keyword>
<keyword id="KW-0934">Plastid</keyword>
<keyword id="KW-1185">Reference proteome</keyword>
<keyword id="KW-0809">Transit peptide</keyword>
<sequence>MAMSFSGAVLTGMASSFHSGAKQSSFGAVRVGQKTQFVVVSQRKKSLIYAAKGDGNILDDLNEATKKASDFVTDKTKEALADGEKAKDYVVEKNSETADTLGKEAEKAAAYVEEKGKEAANKAAEFAEGKAGEAKDATK</sequence>
<comment type="function">
    <text evidence="2 9 12 13 16 17 19 24">Exhibits cryoprotective activity toward stromal substrates (e.g. LDH and rubisco) in chloroplasts and in protoplasts and confers freezing tolerance to plants in a CBF-dependent manner (PubMed:11038526, PubMed:1567390, PubMed:17384167, PubMed:18540080, PubMed:19563440, PubMed:9826741). Protectant against various stresses (e.g. cold, drought and heat stress) by preventing protein aggregation (e.g. LDH) and attenuating enzyme inactivation (PubMed:18540080). Influences the intrinsic curvature of the inner membrane of the chloroplast envelope, and modulates the freeze-induced lamellar-to-hexagonal II phase transitions that occur in regions where the plasma membrane is brought into close apposition with the chloroplast envelope during freeze-induced osmotic contraction (PubMed:9826741). Mediates a shift in the melting curves of phospholipids-containing membranes to lower temperatures (PubMed:20510170). Involved in the regulation of leaf senescence by abscisic acid (ABA) in a VNI2-dependent manner (PubMed:21673078).</text>
</comment>
<comment type="subunit">
    <text evidence="12 17">Forms homooligomers which interact with potential stromal substrates in the stroma of chloroplasts (PubMed:17384167). Interacts with the galactose headgroup of the chloroplast lipid monogalactosyldiacylglycerol (MGDG) (PubMed:20510170).</text>
</comment>
<comment type="subcellular location">
    <subcellularLocation>
        <location evidence="11 12 22">Plastid</location>
        <location evidence="11 12 22">Chloroplast stroma</location>
    </subcellularLocation>
</comment>
<comment type="alternative products">
    <event type="alternative splicing"/>
    <isoform>
        <id>Q42512-1</id>
        <name>1</name>
        <sequence type="displayed"/>
    </isoform>
    <isoform>
        <id>Q42512-2</id>
        <name>2</name>
        <sequence type="described" ref="VSP_057558"/>
    </isoform>
    <text evidence="26">Additional isoforms seem to exist.</text>
</comment>
<comment type="induction">
    <text evidence="3 4 5 6 7 8 10 11 12 14 15 16 18 19 20 21 23">Accumulates in leaves during cold acclimation (at protein level) (PubMed:16668917, PubMed:17384167). Strongly induced by cold in association with a gradual irreversible decrease of H3K27me3 in the promoter region (PubMed:11706173, PubMed:11779861, PubMed:12148528, PubMed:14745450, PubMed:15144380, PubMed:16258011, PubMed:19470100, PubMed:19500304, PubMed:19563440, PubMed:8193295, PubMed:9668134). Expressed transiently after moderate decrease in temperature (cooling) through the CBF signaling cascade, thus leading to an enhanced subsequent freezing resistance (PubMed:19563440). Accumulates in response to high light, drought, high salt, polyethylene glycol (PEG) and abscisic acid (ABA) (PubMed:11779861, PubMed:12148528, PubMed:12785063, PubMed:21673078, PubMed:21832142, PubMed:8193295, PubMed:9668134). Cold-mediated induction is light-dependent and light-stimulated, and requires functional chloroplasts (PubMed:12148528, PubMed:17384167, PubMed:21471455). Follow a circadian-regulated expression with a progressive accumulation during the light phase and a drop during the dark phase (PubMed:21471455).</text>
</comment>
<comment type="miscellaneous">
    <text evidence="11 12 17">Remaining soluble upon boiling in aqueous solution. Oligomers can stay soluble with small structural change after boiling and freeze-thaw treatments (PubMed:16668917, PubMed:17384167). Predominantly unstructured in solution and mainly alpha-helical after drying (PubMed:20510170).</text>
</comment>
<comment type="similarity">
    <text evidence="26">Belongs to the COR15 protein family.</text>
</comment>
<gene>
    <name evidence="25" type="primary">COR15A</name>
    <name evidence="27" type="ordered locus">At2g42540</name>
    <name evidence="29" type="ORF">F14N22.19</name>
</gene>
<protein>
    <recommendedName>
        <fullName evidence="25">Protein COLD-REGULATED 15A, chloroplastic</fullName>
        <shortName evidence="25">AtCOR15A</shortName>
    </recommendedName>
</protein>